<feature type="chain" id="PRO_1000018707" description="Phosphoribosylaminoimidazole-succinocarboxamide synthase">
    <location>
        <begin position="1"/>
        <end position="296"/>
    </location>
</feature>
<reference key="1">
    <citation type="journal article" date="2009" name="BMC Microbiol.">
        <title>The genome sequence of Geobacter metallireducens: features of metabolism, physiology and regulation common and dissimilar to Geobacter sulfurreducens.</title>
        <authorList>
            <person name="Aklujkar M."/>
            <person name="Krushkal J."/>
            <person name="DiBartolo G."/>
            <person name="Lapidus A."/>
            <person name="Land M.L."/>
            <person name="Lovley D.R."/>
        </authorList>
    </citation>
    <scope>NUCLEOTIDE SEQUENCE [LARGE SCALE GENOMIC DNA]</scope>
    <source>
        <strain>ATCC 53774 / DSM 7210 / GS-15</strain>
    </source>
</reference>
<proteinExistence type="inferred from homology"/>
<keyword id="KW-0067">ATP-binding</keyword>
<keyword id="KW-0436">Ligase</keyword>
<keyword id="KW-0547">Nucleotide-binding</keyword>
<keyword id="KW-0658">Purine biosynthesis</keyword>
<keyword id="KW-1185">Reference proteome</keyword>
<dbReference type="EC" id="6.3.2.6" evidence="1"/>
<dbReference type="EMBL" id="CP000148">
    <property type="protein sequence ID" value="ABB31158.1"/>
    <property type="molecule type" value="Genomic_DNA"/>
</dbReference>
<dbReference type="RefSeq" id="WP_004513946.1">
    <property type="nucleotide sequence ID" value="NC_007517.1"/>
</dbReference>
<dbReference type="SMR" id="Q39X66"/>
<dbReference type="STRING" id="269799.Gmet_0916"/>
<dbReference type="KEGG" id="gme:Gmet_0916"/>
<dbReference type="eggNOG" id="COG0152">
    <property type="taxonomic scope" value="Bacteria"/>
</dbReference>
<dbReference type="HOGENOM" id="CLU_045637_0_0_7"/>
<dbReference type="UniPathway" id="UPA00074">
    <property type="reaction ID" value="UER00131"/>
</dbReference>
<dbReference type="Proteomes" id="UP000007073">
    <property type="component" value="Chromosome"/>
</dbReference>
<dbReference type="GO" id="GO:0005737">
    <property type="term" value="C:cytoplasm"/>
    <property type="evidence" value="ECO:0007669"/>
    <property type="project" value="TreeGrafter"/>
</dbReference>
<dbReference type="GO" id="GO:0005524">
    <property type="term" value="F:ATP binding"/>
    <property type="evidence" value="ECO:0007669"/>
    <property type="project" value="UniProtKB-KW"/>
</dbReference>
<dbReference type="GO" id="GO:0004639">
    <property type="term" value="F:phosphoribosylaminoimidazolesuccinocarboxamide synthase activity"/>
    <property type="evidence" value="ECO:0007669"/>
    <property type="project" value="UniProtKB-UniRule"/>
</dbReference>
<dbReference type="GO" id="GO:0006189">
    <property type="term" value="P:'de novo' IMP biosynthetic process"/>
    <property type="evidence" value="ECO:0007669"/>
    <property type="project" value="UniProtKB-UniRule"/>
</dbReference>
<dbReference type="CDD" id="cd01414">
    <property type="entry name" value="SAICAR_synt_Sc"/>
    <property type="match status" value="1"/>
</dbReference>
<dbReference type="FunFam" id="3.30.200.20:FF:000392">
    <property type="entry name" value="Phosphoribosylaminoimidazole-succinocarboxamide synthase"/>
    <property type="match status" value="1"/>
</dbReference>
<dbReference type="FunFam" id="3.30.470.20:FF:000015">
    <property type="entry name" value="Phosphoribosylaminoimidazole-succinocarboxamide synthase"/>
    <property type="match status" value="1"/>
</dbReference>
<dbReference type="Gene3D" id="3.30.470.20">
    <property type="entry name" value="ATP-grasp fold, B domain"/>
    <property type="match status" value="1"/>
</dbReference>
<dbReference type="Gene3D" id="3.30.200.20">
    <property type="entry name" value="Phosphorylase Kinase, domain 1"/>
    <property type="match status" value="1"/>
</dbReference>
<dbReference type="HAMAP" id="MF_00137">
    <property type="entry name" value="SAICAR_synth"/>
    <property type="match status" value="1"/>
</dbReference>
<dbReference type="InterPro" id="IPR028923">
    <property type="entry name" value="SAICAR_synt/ADE2_N"/>
</dbReference>
<dbReference type="InterPro" id="IPR001636">
    <property type="entry name" value="SAICAR_synth"/>
</dbReference>
<dbReference type="NCBIfam" id="NF010568">
    <property type="entry name" value="PRK13961.1"/>
    <property type="match status" value="1"/>
</dbReference>
<dbReference type="NCBIfam" id="TIGR00081">
    <property type="entry name" value="purC"/>
    <property type="match status" value="1"/>
</dbReference>
<dbReference type="PANTHER" id="PTHR43700">
    <property type="entry name" value="PHOSPHORIBOSYLAMINOIMIDAZOLE-SUCCINOCARBOXAMIDE SYNTHASE"/>
    <property type="match status" value="1"/>
</dbReference>
<dbReference type="PANTHER" id="PTHR43700:SF1">
    <property type="entry name" value="PHOSPHORIBOSYLAMINOIMIDAZOLE-SUCCINOCARBOXAMIDE SYNTHASE"/>
    <property type="match status" value="1"/>
</dbReference>
<dbReference type="Pfam" id="PF01259">
    <property type="entry name" value="SAICAR_synt"/>
    <property type="match status" value="1"/>
</dbReference>
<dbReference type="SUPFAM" id="SSF56104">
    <property type="entry name" value="SAICAR synthase-like"/>
    <property type="match status" value="1"/>
</dbReference>
<sequence length="296" mass="33042">MANLVLKTDFPDLKLVARGKVRDIYDLGEALLIVTTDRISAFDVIMNEGIPDKGYVLTQISAFWFRQMEDIIPNHIISTEVKDFPAECQKYAADLEGRSMLVKKANPLPAECIVRGYISGSGWKDYKATGSICGIKLPAGLVESDKLEEPIFTPSTKAELGTHDENISFDRMVEMMGKELAGKVRDVTIAIYKRARDIADAKGIIIADTKFEYGIYNGELIIIDECMTPDSSRFWPKDSYKPGGAQPSFDKQFLRDYLETLDWNKTAPAPPLPAEIVKKTGEKYMEALVRLTGKGK</sequence>
<name>PUR7_GEOMG</name>
<accession>Q39X66</accession>
<protein>
    <recommendedName>
        <fullName evidence="1">Phosphoribosylaminoimidazole-succinocarboxamide synthase</fullName>
        <ecNumber evidence="1">6.3.2.6</ecNumber>
    </recommendedName>
    <alternativeName>
        <fullName evidence="1">SAICAR synthetase</fullName>
    </alternativeName>
</protein>
<comment type="catalytic activity">
    <reaction evidence="1">
        <text>5-amino-1-(5-phospho-D-ribosyl)imidazole-4-carboxylate + L-aspartate + ATP = (2S)-2-[5-amino-1-(5-phospho-beta-D-ribosyl)imidazole-4-carboxamido]succinate + ADP + phosphate + 2 H(+)</text>
        <dbReference type="Rhea" id="RHEA:22628"/>
        <dbReference type="ChEBI" id="CHEBI:15378"/>
        <dbReference type="ChEBI" id="CHEBI:29991"/>
        <dbReference type="ChEBI" id="CHEBI:30616"/>
        <dbReference type="ChEBI" id="CHEBI:43474"/>
        <dbReference type="ChEBI" id="CHEBI:58443"/>
        <dbReference type="ChEBI" id="CHEBI:77657"/>
        <dbReference type="ChEBI" id="CHEBI:456216"/>
        <dbReference type="EC" id="6.3.2.6"/>
    </reaction>
</comment>
<comment type="pathway">
    <text evidence="1">Purine metabolism; IMP biosynthesis via de novo pathway; 5-amino-1-(5-phospho-D-ribosyl)imidazole-4-carboxamide from 5-amino-1-(5-phospho-D-ribosyl)imidazole-4-carboxylate: step 1/2.</text>
</comment>
<comment type="similarity">
    <text evidence="1">Belongs to the SAICAR synthetase family.</text>
</comment>
<gene>
    <name evidence="1" type="primary">purC</name>
    <name type="ordered locus">Gmet_0916</name>
</gene>
<evidence type="ECO:0000255" key="1">
    <source>
        <dbReference type="HAMAP-Rule" id="MF_00137"/>
    </source>
</evidence>
<organism>
    <name type="scientific">Geobacter metallireducens (strain ATCC 53774 / DSM 7210 / GS-15)</name>
    <dbReference type="NCBI Taxonomy" id="269799"/>
    <lineage>
        <taxon>Bacteria</taxon>
        <taxon>Pseudomonadati</taxon>
        <taxon>Thermodesulfobacteriota</taxon>
        <taxon>Desulfuromonadia</taxon>
        <taxon>Geobacterales</taxon>
        <taxon>Geobacteraceae</taxon>
        <taxon>Geobacter</taxon>
    </lineage>
</organism>